<sequence>MEGSANQLQPLSETQVVNSEGGCVWQVTDMNRLRRFLCFGSEGGTYYIKEQKLGLENAEALIRLIEDGRGCEVIQEIKSFSQEGRTAKQEPLLFALAVCSQCADINTKQAAFKAVPEVCRIPTHLFTFIQFKKDLKESMKCGMWGRALRKAVADWYNEKGGMAVALVVTKYKQRNGWSHKDLLRLSHLKPSSEGLAIVTKYITKGWKEVHEEYKEKALSVEAEKLLKYLEAVEKVKRTKDDLEVIHLIEEHQLVREHLLTNHLKSKEVWKALLQEMPLTALLRNLGKMTANSVLEPGNSEVSLICEKLSNEKLLKKARIHPFHVLIALETYRAGHGLRGKLKWIPDKDILQALDAAFYTTFKTVEPTGKRFLLAVDVSASMNQRALGSVLNASTVAAAMCMVVTRTEKESSVVAFACDMVPFPVTTDMTLQQVLTAMNKVPAGNTDCSLPMIWAQKTDTAADVFVVFTDNETFAGQVHPAVALREYRKKMDIPAKLIVCGMTSNGFTIADPDDRGMLDMCGFDTAALDVIRNFTLDVI</sequence>
<gene>
    <name evidence="7" type="primary">RO60</name>
    <name evidence="7" type="synonym">Ssa2</name>
    <name evidence="7" type="synonym">Trove2</name>
</gene>
<organism>
    <name type="scientific">Mus musculus</name>
    <name type="common">Mouse</name>
    <dbReference type="NCBI Taxonomy" id="10090"/>
    <lineage>
        <taxon>Eukaryota</taxon>
        <taxon>Metazoa</taxon>
        <taxon>Chordata</taxon>
        <taxon>Craniata</taxon>
        <taxon>Vertebrata</taxon>
        <taxon>Euteleostomi</taxon>
        <taxon>Mammalia</taxon>
        <taxon>Eutheria</taxon>
        <taxon>Euarchontoglires</taxon>
        <taxon>Glires</taxon>
        <taxon>Rodentia</taxon>
        <taxon>Myomorpha</taxon>
        <taxon>Muroidea</taxon>
        <taxon>Muridae</taxon>
        <taxon>Murinae</taxon>
        <taxon>Mus</taxon>
        <taxon>Mus</taxon>
    </lineage>
</organism>
<protein>
    <recommendedName>
        <fullName evidence="7">RNA-binding protein Ro60</fullName>
    </recommendedName>
    <alternativeName>
        <fullName evidence="6">60 kDa SS-A/Ro ribonucleoprotein</fullName>
        <shortName>60 kDa Ro protein</shortName>
        <shortName>60 kDa ribonucleoprotein Ro</shortName>
        <shortName>RoRNP</shortName>
    </alternativeName>
    <alternativeName>
        <fullName evidence="1">TROVE domain family member 2</fullName>
    </alternativeName>
</protein>
<evidence type="ECO:0000250" key="1">
    <source>
        <dbReference type="UniProtKB" id="P10155"/>
    </source>
</evidence>
<evidence type="ECO:0000250" key="2">
    <source>
        <dbReference type="UniProtKB" id="P42700"/>
    </source>
</evidence>
<evidence type="ECO:0000255" key="3">
    <source>
        <dbReference type="PROSITE-ProRule" id="PRU00343"/>
    </source>
</evidence>
<evidence type="ECO:0000269" key="4">
    <source>
    </source>
</evidence>
<evidence type="ECO:0000269" key="5">
    <source>
    </source>
</evidence>
<evidence type="ECO:0000305" key="6"/>
<evidence type="ECO:0000312" key="7">
    <source>
        <dbReference type="MGI" id="MGI:106652"/>
    </source>
</evidence>
<proteinExistence type="evidence at protein level"/>
<dbReference type="EMBL" id="U66843">
    <property type="protein sequence ID" value="AAC53142.1"/>
    <property type="molecule type" value="mRNA"/>
</dbReference>
<dbReference type="EMBL" id="AF065398">
    <property type="protein sequence ID" value="AAF19049.1"/>
    <property type="molecule type" value="Genomic_DNA"/>
</dbReference>
<dbReference type="EMBL" id="AF042139">
    <property type="protein sequence ID" value="AAC15667.1"/>
    <property type="molecule type" value="Genomic_DNA"/>
</dbReference>
<dbReference type="CCDS" id="CCDS15345.1"/>
<dbReference type="RefSeq" id="NP_038863.1">
    <property type="nucleotide sequence ID" value="NM_013835.2"/>
</dbReference>
<dbReference type="RefSeq" id="XP_017174940.1">
    <property type="nucleotide sequence ID" value="XM_017319451.1"/>
</dbReference>
<dbReference type="SMR" id="O08848"/>
<dbReference type="BioGRID" id="203507">
    <property type="interactions" value="40"/>
</dbReference>
<dbReference type="FunCoup" id="O08848">
    <property type="interactions" value="4333"/>
</dbReference>
<dbReference type="IntAct" id="O08848">
    <property type="interactions" value="2"/>
</dbReference>
<dbReference type="STRING" id="10090.ENSMUSP00000125623"/>
<dbReference type="iPTMnet" id="O08848"/>
<dbReference type="PhosphoSitePlus" id="O08848"/>
<dbReference type="SwissPalm" id="O08848"/>
<dbReference type="PaxDb" id="10090-ENSMUSP00000125623"/>
<dbReference type="PeptideAtlas" id="O08848"/>
<dbReference type="ProteomicsDB" id="301632"/>
<dbReference type="Pumba" id="O08848"/>
<dbReference type="Antibodypedia" id="1048">
    <property type="antibodies" value="384 antibodies from 36 providers"/>
</dbReference>
<dbReference type="DNASU" id="20822"/>
<dbReference type="Ensembl" id="ENSMUST00000159879.2">
    <property type="protein sequence ID" value="ENSMUSP00000125623.2"/>
    <property type="gene ID" value="ENSMUSG00000018199.10"/>
</dbReference>
<dbReference type="GeneID" id="20822"/>
<dbReference type="KEGG" id="mmu:20822"/>
<dbReference type="UCSC" id="uc007cxd.1">
    <property type="organism name" value="mouse"/>
</dbReference>
<dbReference type="AGR" id="MGI:106652"/>
<dbReference type="CTD" id="6738"/>
<dbReference type="MGI" id="MGI:106652">
    <property type="gene designation" value="Ro60"/>
</dbReference>
<dbReference type="VEuPathDB" id="HostDB:ENSMUSG00000018199"/>
<dbReference type="eggNOG" id="KOG4465">
    <property type="taxonomic scope" value="Eukaryota"/>
</dbReference>
<dbReference type="GeneTree" id="ENSGT00390000006200"/>
<dbReference type="HOGENOM" id="CLU_024421_1_0_1"/>
<dbReference type="InParanoid" id="O08848"/>
<dbReference type="OMA" id="WWYEWLK"/>
<dbReference type="OrthoDB" id="6098064at2759"/>
<dbReference type="PhylomeDB" id="O08848"/>
<dbReference type="TreeFam" id="TF105990"/>
<dbReference type="BioGRID-ORCS" id="20822">
    <property type="hits" value="0 hits in 78 CRISPR screens"/>
</dbReference>
<dbReference type="ChiTaRS" id="Ro60">
    <property type="organism name" value="mouse"/>
</dbReference>
<dbReference type="PRO" id="PR:O08848"/>
<dbReference type="Proteomes" id="UP000000589">
    <property type="component" value="Chromosome 1"/>
</dbReference>
<dbReference type="RNAct" id="O08848">
    <property type="molecule type" value="protein"/>
</dbReference>
<dbReference type="Bgee" id="ENSMUSG00000018199">
    <property type="expression patterns" value="Expressed in superior surface of tongue and 252 other cell types or tissues"/>
</dbReference>
<dbReference type="ExpressionAtlas" id="O08848">
    <property type="expression patterns" value="baseline and differential"/>
</dbReference>
<dbReference type="GO" id="GO:0005929">
    <property type="term" value="C:cilium"/>
    <property type="evidence" value="ECO:0007669"/>
    <property type="project" value="Ensembl"/>
</dbReference>
<dbReference type="GO" id="GO:0005737">
    <property type="term" value="C:cytoplasm"/>
    <property type="evidence" value="ECO:0000314"/>
    <property type="project" value="MGI"/>
</dbReference>
<dbReference type="GO" id="GO:0005829">
    <property type="term" value="C:cytosol"/>
    <property type="evidence" value="ECO:0007669"/>
    <property type="project" value="Ensembl"/>
</dbReference>
<dbReference type="GO" id="GO:0016604">
    <property type="term" value="C:nuclear body"/>
    <property type="evidence" value="ECO:0007669"/>
    <property type="project" value="Ensembl"/>
</dbReference>
<dbReference type="GO" id="GO:0005634">
    <property type="term" value="C:nucleus"/>
    <property type="evidence" value="ECO:0000314"/>
    <property type="project" value="MGI"/>
</dbReference>
<dbReference type="GO" id="GO:1990904">
    <property type="term" value="C:ribonucleoprotein complex"/>
    <property type="evidence" value="ECO:0000314"/>
    <property type="project" value="MGI"/>
</dbReference>
<dbReference type="GO" id="GO:0046872">
    <property type="term" value="F:metal ion binding"/>
    <property type="evidence" value="ECO:0007669"/>
    <property type="project" value="UniProtKB-KW"/>
</dbReference>
<dbReference type="GO" id="GO:0034336">
    <property type="term" value="F:misfolded RNA binding"/>
    <property type="evidence" value="ECO:0000266"/>
    <property type="project" value="MGI"/>
</dbReference>
<dbReference type="GO" id="GO:0003723">
    <property type="term" value="F:RNA binding"/>
    <property type="evidence" value="ECO:0000314"/>
    <property type="project" value="MGI"/>
</dbReference>
<dbReference type="GO" id="GO:0030620">
    <property type="term" value="F:U2 snRNA binding"/>
    <property type="evidence" value="ECO:0000314"/>
    <property type="project" value="MGI"/>
</dbReference>
<dbReference type="GO" id="GO:0035457">
    <property type="term" value="P:cellular response to interferon-alpha"/>
    <property type="evidence" value="ECO:0000250"/>
    <property type="project" value="UniProtKB"/>
</dbReference>
<dbReference type="GO" id="GO:0060271">
    <property type="term" value="P:cilium assembly"/>
    <property type="evidence" value="ECO:0000315"/>
    <property type="project" value="MGI"/>
</dbReference>
<dbReference type="GO" id="GO:0002520">
    <property type="term" value="P:immune system development"/>
    <property type="evidence" value="ECO:0000315"/>
    <property type="project" value="MGI"/>
</dbReference>
<dbReference type="GO" id="GO:0010468">
    <property type="term" value="P:regulation of gene expression"/>
    <property type="evidence" value="ECO:0000250"/>
    <property type="project" value="UniProtKB"/>
</dbReference>
<dbReference type="GO" id="GO:0009411">
    <property type="term" value="P:response to UV"/>
    <property type="evidence" value="ECO:0000314"/>
    <property type="project" value="MGI"/>
</dbReference>
<dbReference type="GO" id="GO:0007224">
    <property type="term" value="P:smoothened signaling pathway"/>
    <property type="evidence" value="ECO:0000315"/>
    <property type="project" value="MGI"/>
</dbReference>
<dbReference type="CDD" id="cd00198">
    <property type="entry name" value="vWFA"/>
    <property type="match status" value="1"/>
</dbReference>
<dbReference type="FunFam" id="3.40.50.410:FF:000033">
    <property type="entry name" value="60 kDa SS-A/Ro ribonucleoprotein"/>
    <property type="match status" value="1"/>
</dbReference>
<dbReference type="FunFam" id="3.40.50.410:FF:000040">
    <property type="entry name" value="60 kDa SS-A/Ro ribonucleoprotein isoform X1"/>
    <property type="match status" value="1"/>
</dbReference>
<dbReference type="Gene3D" id="3.40.50.410">
    <property type="entry name" value="von Willebrand factor, type A domain"/>
    <property type="match status" value="2"/>
</dbReference>
<dbReference type="InterPro" id="IPR040322">
    <property type="entry name" value="TROVE2"/>
</dbReference>
<dbReference type="InterPro" id="IPR008858">
    <property type="entry name" value="TROVE_dom"/>
</dbReference>
<dbReference type="InterPro" id="IPR037214">
    <property type="entry name" value="TROVE_dom_sf"/>
</dbReference>
<dbReference type="InterPro" id="IPR056800">
    <property type="entry name" value="vWA_Ro60"/>
</dbReference>
<dbReference type="InterPro" id="IPR036465">
    <property type="entry name" value="vWFA_dom_sf"/>
</dbReference>
<dbReference type="PANTHER" id="PTHR14202">
    <property type="entry name" value="60 KDA RIBONUCLEOPROTEIN SSA/RO"/>
    <property type="match status" value="1"/>
</dbReference>
<dbReference type="PANTHER" id="PTHR14202:SF0">
    <property type="entry name" value="RNA-BINDING PROTEIN RO60"/>
    <property type="match status" value="1"/>
</dbReference>
<dbReference type="Pfam" id="PF05731">
    <property type="entry name" value="TROVE"/>
    <property type="match status" value="1"/>
</dbReference>
<dbReference type="Pfam" id="PF25045">
    <property type="entry name" value="vWA_Ro60"/>
    <property type="match status" value="1"/>
</dbReference>
<dbReference type="SUPFAM" id="SSF140864">
    <property type="entry name" value="TROVE domain-like"/>
    <property type="match status" value="1"/>
</dbReference>
<dbReference type="SUPFAM" id="SSF53300">
    <property type="entry name" value="vWA-like"/>
    <property type="match status" value="1"/>
</dbReference>
<dbReference type="PROSITE" id="PS50988">
    <property type="entry name" value="TROVE"/>
    <property type="match status" value="1"/>
</dbReference>
<name>RO60_MOUSE</name>
<keyword id="KW-0007">Acetylation</keyword>
<keyword id="KW-0970">Cilium biogenesis/degradation</keyword>
<keyword id="KW-0963">Cytoplasm</keyword>
<keyword id="KW-0903">Direct protein sequencing</keyword>
<keyword id="KW-0479">Metal-binding</keyword>
<keyword id="KW-0597">Phosphoprotein</keyword>
<keyword id="KW-1185">Reference proteome</keyword>
<keyword id="KW-0677">Repeat</keyword>
<keyword id="KW-0687">Ribonucleoprotein</keyword>
<keyword id="KW-0694">RNA-binding</keyword>
<reference key="1">
    <citation type="journal article" date="1996" name="Mol. Biol. Rep.">
        <title>Cloning and expression of mouse 60 kDa ribonucleoprotein SS-A/Ro.</title>
        <authorList>
            <person name="Wang D."/>
            <person name="Buyon J.P."/>
            <person name="Chan E.K.L."/>
        </authorList>
    </citation>
    <scope>NUCLEOTIDE SEQUENCE [MRNA]</scope>
    <scope>TISSUE SPECIFICITY</scope>
    <source>
        <tissue>Heart</tissue>
    </source>
</reference>
<reference key="2">
    <citation type="journal article" date="2000" name="Genes Immun.">
        <title>Characterization and genomic sequence of the murine 60 kD Ro gene.</title>
        <authorList>
            <person name="Kaufman K.M."/>
            <person name="Farris A.D."/>
            <person name="Gross J.K."/>
            <person name="Kirby M.Y."/>
            <person name="Harley J.B."/>
        </authorList>
    </citation>
    <scope>NUCLEOTIDE SEQUENCE [GENOMIC DNA]</scope>
    <source>
        <strain>129/SvJ</strain>
    </source>
</reference>
<reference key="3">
    <citation type="journal article" date="1999" name="Arthritis Rheum.">
        <title>Immunization of mice with human 60-kd Ro peptides results in epitope spreading if the peptides are highly homologous between human and mouse.</title>
        <authorList>
            <person name="Scofield R.H."/>
            <person name="Kaufman K.M."/>
            <person name="Baber U."/>
            <person name="James J.A."/>
            <person name="Harley J.B."/>
            <person name="Kurien B.T."/>
        </authorList>
    </citation>
    <scope>NUCLEOTIDE SEQUENCE [GENOMIC DNA] OF 82-538</scope>
</reference>
<reference key="4">
    <citation type="submission" date="2009-01" db="UniProtKB">
        <authorList>
            <person name="Lubec G."/>
            <person name="Sunyer B."/>
            <person name="Chen W.-Q."/>
        </authorList>
    </citation>
    <scope>PROTEIN SEQUENCE OF 271-283</scope>
    <scope>IDENTIFICATION BY MASS SPECTROMETRY</scope>
    <source>
        <strain>OF1</strain>
        <tissue>Hippocampus</tissue>
    </source>
</reference>
<reference key="5">
    <citation type="journal article" date="2010" name="Cell">
        <title>A tissue-specific atlas of mouse protein phosphorylation and expression.</title>
        <authorList>
            <person name="Huttlin E.L."/>
            <person name="Jedrychowski M.P."/>
            <person name="Elias J.E."/>
            <person name="Goswami T."/>
            <person name="Rad R."/>
            <person name="Beausoleil S.A."/>
            <person name="Villen J."/>
            <person name="Haas W."/>
            <person name="Sowa M.E."/>
            <person name="Gygi S.P."/>
        </authorList>
    </citation>
    <scope>IDENTIFICATION BY MASS SPECTROMETRY [LARGE SCALE ANALYSIS]</scope>
    <source>
        <tissue>Brain</tissue>
        <tissue>Kidney</tissue>
        <tissue>Lung</tissue>
        <tissue>Pancreas</tissue>
        <tissue>Spleen</tissue>
        <tissue>Testis</tissue>
    </source>
</reference>
<reference key="6">
    <citation type="journal article" date="2011" name="Mol. Biol. Cell">
        <title>Functional characterization of putative cilia genes by high-content analysis.</title>
        <authorList>
            <person name="Lai C.K."/>
            <person name="Gupta N."/>
            <person name="Wen X."/>
            <person name="Rangell L."/>
            <person name="Chih B."/>
            <person name="Peterson A.S."/>
            <person name="Bazan J.F."/>
            <person name="Li L."/>
            <person name="Scales S.J."/>
        </authorList>
    </citation>
    <scope>FUNCTION</scope>
    <scope>DISRUPTION PHENOTYPE</scope>
</reference>
<comment type="function">
    <text evidence="1 4">RNA-binding protein that binds to misfolded non-coding RNAs, pre-5S rRNA, and several small cytoplasmic RNA molecules known as Y RNAs (By similarity). May play roles in cilia formation and/or maintenance (PubMed:21289087).</text>
</comment>
<comment type="subunit">
    <text evidence="1">Identified in a IGF2BP1-dependent mRNP granule complex containing untranslated mRNAs (By similarity). Found in a complex with PUF60 and Y5 RNA (By similarity). Interacts with RAB11FIP5 (By similarity).</text>
</comment>
<comment type="subcellular location">
    <subcellularLocation>
        <location evidence="1">Cytoplasm</location>
    </subcellularLocation>
    <text evidence="1">Localized in cytoplasmic mRNP granules containing untranslated mRNAs.</text>
</comment>
<comment type="tissue specificity">
    <text evidence="5">Highest in brain, followed by lung, muscle, kidney and heart. Lower levels are found in testis, liver and spleen.</text>
</comment>
<comment type="domain">
    <text evidence="2">The horseshoe-shaped TROVE domain is built with 7 helical HEAT-like repeats, and is closed by the VWFA-like domain giving rise to a ring-shaped monomer. Single-stranded RNA is bound in the positively charged central cavity (By similarity).</text>
</comment>
<comment type="domain">
    <text evidence="2">The MIDAS-like motif in the VWFA-like domain binds divalent metal cations.</text>
</comment>
<comment type="disruption phenotype">
    <text evidence="4">Cilia absent or reduced, virtually no cilia of the normal 5 uM mean length.</text>
</comment>
<comment type="similarity">
    <text evidence="6">Belongs to the Ro 60 kDa family.</text>
</comment>
<feature type="chain" id="PRO_0000174170" description="RNA-binding protein Ro60">
    <location>
        <begin position="1"/>
        <end position="538"/>
    </location>
</feature>
<feature type="domain" description="TROVE" evidence="3">
    <location>
        <begin position="16"/>
        <end position="369"/>
    </location>
</feature>
<feature type="region of interest" description="RNA-binding" evidence="2">
    <location>
        <begin position="120"/>
        <end position="284"/>
    </location>
</feature>
<feature type="region of interest" description="VWFA-like domain" evidence="2">
    <location>
        <begin position="361"/>
        <end position="538"/>
    </location>
</feature>
<feature type="binding site" evidence="2">
    <location>
        <position position="378"/>
    </location>
    <ligand>
        <name>a divalent metal cation</name>
        <dbReference type="ChEBI" id="CHEBI:60240"/>
    </ligand>
</feature>
<feature type="binding site" evidence="2">
    <location>
        <position position="380"/>
    </location>
    <ligand>
        <name>a divalent metal cation</name>
        <dbReference type="ChEBI" id="CHEBI:60240"/>
    </ligand>
</feature>
<feature type="binding site" evidence="2">
    <location>
        <position position="445"/>
    </location>
    <ligand>
        <name>a divalent metal cation</name>
        <dbReference type="ChEBI" id="CHEBI:60240"/>
    </ligand>
</feature>
<feature type="modified residue" description="N-acetylmethionine" evidence="1">
    <location>
        <position position="1"/>
    </location>
</feature>
<feature type="modified residue" description="Phosphoserine" evidence="1">
    <location>
        <position position="4"/>
    </location>
</feature>
<feature type="modified residue" description="Phosphoserine" evidence="1">
    <location>
        <position position="19"/>
    </location>
</feature>
<feature type="modified residue" description="N6-acetyllysine" evidence="1">
    <location>
        <position position="224"/>
    </location>
</feature>
<feature type="sequence conflict" description="In Ref. 2; AAF19049." evidence="6" ref="2">
    <original>RL</original>
    <variation>V</variation>
    <location>
        <begin position="32"/>
        <end position="33"/>
    </location>
</feature>
<feature type="sequence conflict" description="In Ref. 2; AAF19049." evidence="6" ref="2">
    <original>D</original>
    <variation>G</variation>
    <location>
        <position position="458"/>
    </location>
</feature>
<feature type="sequence conflict" description="In Ref. 2; AAF19049." evidence="6" ref="2">
    <original>V</original>
    <variation>I</variation>
    <location>
        <position position="465"/>
    </location>
</feature>
<accession>O08848</accession>
<accession>Q9QYD8</accession>